<feature type="signal peptide" evidence="3">
    <location>
        <begin position="1"/>
        <end position="22"/>
    </location>
</feature>
<feature type="propeptide" id="PRO_0000026287" description="Activation peptide" evidence="3">
    <location>
        <begin position="23"/>
        <end position="63"/>
    </location>
</feature>
<feature type="chain" id="PRO_0000026288" description="Cathepsin Z">
    <location>
        <begin position="64"/>
        <end position="306"/>
    </location>
</feature>
<feature type="active site" evidence="4">
    <location>
        <position position="94"/>
    </location>
</feature>
<feature type="active site" evidence="4">
    <location>
        <position position="243"/>
    </location>
</feature>
<feature type="active site" evidence="4">
    <location>
        <position position="264"/>
    </location>
</feature>
<feature type="glycosylation site" description="N-linked (GlcNAc...) asparagine" evidence="3">
    <location>
        <position position="186"/>
    </location>
</feature>
<feature type="glycosylation site" description="N-linked (GlcNAc...) asparagine" evidence="3">
    <location>
        <position position="226"/>
    </location>
</feature>
<feature type="disulfide bond" evidence="2">
    <location>
        <begin position="35"/>
        <end position="94"/>
    </location>
</feature>
<feature type="disulfide bond" evidence="2">
    <location>
        <begin position="91"/>
        <end position="134"/>
    </location>
</feature>
<feature type="disulfide bond" evidence="2">
    <location>
        <begin position="128"/>
        <end position="166"/>
    </location>
</feature>
<feature type="disulfide bond" evidence="2">
    <location>
        <begin position="156"/>
        <end position="172"/>
    </location>
</feature>
<feature type="disulfide bond" evidence="2">
    <location>
        <begin position="175"/>
        <end position="181"/>
    </location>
</feature>
<feature type="disulfide bond" evidence="2">
    <location>
        <begin position="216"/>
        <end position="299"/>
    </location>
</feature>
<keyword id="KW-1015">Disulfide bond</keyword>
<keyword id="KW-0325">Glycoprotein</keyword>
<keyword id="KW-0378">Hydrolase</keyword>
<keyword id="KW-0458">Lysosome</keyword>
<keyword id="KW-0645">Protease</keyword>
<keyword id="KW-1185">Reference proteome</keyword>
<keyword id="KW-0732">Signal</keyword>
<keyword id="KW-0788">Thiol protease</keyword>
<keyword id="KW-0865">Zymogen</keyword>
<protein>
    <recommendedName>
        <fullName>Cathepsin Z</fullName>
        <ecNumber evidence="2">3.4.18.1</ecNumber>
    </recommendedName>
</protein>
<comment type="function">
    <text evidence="1 2">Exhibits carboxy-monopeptidase as well as carboxy-dipeptidase activity (By similarity). Capable of producing kinin potentiating peptides (By similarity).</text>
</comment>
<comment type="catalytic activity">
    <reaction evidence="2">
        <text>Release of C-terminal amino acid residues with broad specificity, but lacks action on C-terminal proline. Shows weak endopeptidase activity.</text>
        <dbReference type="EC" id="3.4.18.1"/>
    </reaction>
</comment>
<comment type="activity regulation">
    <text evidence="2">The disulfide bridge formed between Cys-35 in the propeptide and the active site residue Cys-94 may prevent activation of the zymogen through formation of a reversible covalent bond with the active site residue.</text>
</comment>
<comment type="subcellular location">
    <subcellularLocation>
        <location>Lysosome</location>
    </subcellularLocation>
</comment>
<comment type="tissue specificity">
    <text>Ubiquitous.</text>
</comment>
<comment type="similarity">
    <text evidence="4">Belongs to the peptidase C1 family.</text>
</comment>
<organism>
    <name type="scientific">Mus musculus</name>
    <name type="common">Mouse</name>
    <dbReference type="NCBI Taxonomy" id="10090"/>
    <lineage>
        <taxon>Eukaryota</taxon>
        <taxon>Metazoa</taxon>
        <taxon>Chordata</taxon>
        <taxon>Craniata</taxon>
        <taxon>Vertebrata</taxon>
        <taxon>Euteleostomi</taxon>
        <taxon>Mammalia</taxon>
        <taxon>Eutheria</taxon>
        <taxon>Euarchontoglires</taxon>
        <taxon>Glires</taxon>
        <taxon>Rodentia</taxon>
        <taxon>Myomorpha</taxon>
        <taxon>Muroidea</taxon>
        <taxon>Muridae</taxon>
        <taxon>Murinae</taxon>
        <taxon>Mus</taxon>
        <taxon>Mus</taxon>
    </lineage>
</organism>
<reference key="1">
    <citation type="submission" date="1999-06" db="EMBL/GenBank/DDBJ databases">
        <authorList>
            <person name="Santamaria I."/>
        </authorList>
    </citation>
    <scope>NUCLEOTIDE SEQUENCE [MRNA]</scope>
</reference>
<reference key="2">
    <citation type="journal article" date="2000" name="Biochim. Biophys. Acta">
        <title>Murine and human cathepsin Z: cDNA-cloning, characterization of the genes and chromosomal localization.</title>
        <authorList>
            <person name="Deussing J."/>
            <person name="von Olshausen I."/>
            <person name="Peters C."/>
        </authorList>
    </citation>
    <scope>NUCLEOTIDE SEQUENCE [GENOMIC DNA / MRNA]</scope>
    <source>
        <tissue>Fetus</tissue>
    </source>
</reference>
<reference key="3">
    <citation type="journal article" date="2004" name="Genome Res.">
        <title>The status, quality, and expansion of the NIH full-length cDNA project: the Mammalian Gene Collection (MGC).</title>
        <authorList>
            <consortium name="The MGC Project Team"/>
        </authorList>
    </citation>
    <scope>NUCLEOTIDE SEQUENCE [LARGE SCALE MRNA]</scope>
    <source>
        <strain>Czech II</strain>
        <tissue>Mammary gland</tissue>
    </source>
</reference>
<reference key="4">
    <citation type="journal article" date="2010" name="Cell">
        <title>A tissue-specific atlas of mouse protein phosphorylation and expression.</title>
        <authorList>
            <person name="Huttlin E.L."/>
            <person name="Jedrychowski M.P."/>
            <person name="Elias J.E."/>
            <person name="Goswami T."/>
            <person name="Rad R."/>
            <person name="Beausoleil S.A."/>
            <person name="Villen J."/>
            <person name="Haas W."/>
            <person name="Sowa M.E."/>
            <person name="Gygi S.P."/>
        </authorList>
    </citation>
    <scope>IDENTIFICATION BY MASS SPECTROMETRY [LARGE SCALE ANALYSIS]</scope>
    <source>
        <tissue>Brain</tissue>
        <tissue>Brown adipose tissue</tissue>
        <tissue>Heart</tissue>
        <tissue>Kidney</tissue>
        <tissue>Liver</tissue>
        <tissue>Lung</tissue>
        <tissue>Spleen</tissue>
        <tissue>Testis</tissue>
    </source>
</reference>
<dbReference type="EC" id="3.4.18.1" evidence="2"/>
<dbReference type="EMBL" id="AJ242663">
    <property type="protein sequence ID" value="CAB44494.1"/>
    <property type="molecule type" value="mRNA"/>
</dbReference>
<dbReference type="EMBL" id="AF136277">
    <property type="protein sequence ID" value="AAF13143.1"/>
    <property type="molecule type" value="mRNA"/>
</dbReference>
<dbReference type="EMBL" id="AF136278">
    <property type="protein sequence ID" value="AAF13144.1"/>
    <property type="molecule type" value="Genomic_DNA"/>
</dbReference>
<dbReference type="EMBL" id="BC008619">
    <property type="protein sequence ID" value="AAH08619.1"/>
    <property type="molecule type" value="mRNA"/>
</dbReference>
<dbReference type="CCDS" id="CCDS17152.1"/>
<dbReference type="RefSeq" id="NP_071720.1">
    <property type="nucleotide sequence ID" value="NM_022325.5"/>
</dbReference>
<dbReference type="SMR" id="Q9WUU7"/>
<dbReference type="BioGRID" id="211031">
    <property type="interactions" value="12"/>
</dbReference>
<dbReference type="FunCoup" id="Q9WUU7">
    <property type="interactions" value="370"/>
</dbReference>
<dbReference type="IntAct" id="Q9WUU7">
    <property type="interactions" value="1"/>
</dbReference>
<dbReference type="STRING" id="10090.ENSMUSP00000016400"/>
<dbReference type="MEROPS" id="C01.013"/>
<dbReference type="GlyConnect" id="2193">
    <property type="glycosylation" value="4 N-Linked glycans (1 site)"/>
</dbReference>
<dbReference type="GlyCosmos" id="Q9WUU7">
    <property type="glycosylation" value="2 sites, 4 glycans"/>
</dbReference>
<dbReference type="GlyGen" id="Q9WUU7">
    <property type="glycosylation" value="4 sites, 5 N-linked glycans (1 site), 1 O-linked glycan (2 sites)"/>
</dbReference>
<dbReference type="iPTMnet" id="Q9WUU7"/>
<dbReference type="PhosphoSitePlus" id="Q9WUU7"/>
<dbReference type="SwissPalm" id="Q9WUU7"/>
<dbReference type="CPTAC" id="non-CPTAC-3774"/>
<dbReference type="jPOST" id="Q9WUU7"/>
<dbReference type="PaxDb" id="10090-ENSMUSP00000016400"/>
<dbReference type="ProteomicsDB" id="279925"/>
<dbReference type="Pumba" id="Q9WUU7"/>
<dbReference type="Antibodypedia" id="35172">
    <property type="antibodies" value="375 antibodies from 28 providers"/>
</dbReference>
<dbReference type="DNASU" id="64138"/>
<dbReference type="Ensembl" id="ENSMUST00000016400.9">
    <property type="protein sequence ID" value="ENSMUSP00000016400.9"/>
    <property type="gene ID" value="ENSMUSG00000016256.11"/>
</dbReference>
<dbReference type="GeneID" id="64138"/>
<dbReference type="KEGG" id="mmu:64138"/>
<dbReference type="UCSC" id="uc008ofd.1">
    <property type="organism name" value="mouse"/>
</dbReference>
<dbReference type="AGR" id="MGI:1891190"/>
<dbReference type="CTD" id="1522"/>
<dbReference type="MGI" id="MGI:1891190">
    <property type="gene designation" value="Ctsz"/>
</dbReference>
<dbReference type="VEuPathDB" id="HostDB:ENSMUSG00000016256"/>
<dbReference type="eggNOG" id="KOG1543">
    <property type="taxonomic scope" value="Eukaryota"/>
</dbReference>
<dbReference type="GeneTree" id="ENSGT00940000155569"/>
<dbReference type="HOGENOM" id="CLU_012184_2_1_1"/>
<dbReference type="InParanoid" id="Q9WUU7"/>
<dbReference type="OMA" id="QSWDWRN"/>
<dbReference type="OrthoDB" id="190265at2759"/>
<dbReference type="PhylomeDB" id="Q9WUU7"/>
<dbReference type="TreeFam" id="TF313225"/>
<dbReference type="BRENDA" id="3.4.18.1">
    <property type="organism ID" value="3474"/>
</dbReference>
<dbReference type="Reactome" id="R-MMU-2022377">
    <property type="pathway name" value="Metabolism of Angiotensinogen to Angiotensins"/>
</dbReference>
<dbReference type="Reactome" id="R-MMU-204005">
    <property type="pathway name" value="COPII-mediated vesicle transport"/>
</dbReference>
<dbReference type="Reactome" id="R-MMU-432720">
    <property type="pathway name" value="Lysosome Vesicle Biogenesis"/>
</dbReference>
<dbReference type="Reactome" id="R-MMU-5694530">
    <property type="pathway name" value="Cargo concentration in the ER"/>
</dbReference>
<dbReference type="Reactome" id="R-MMU-6798695">
    <property type="pathway name" value="Neutrophil degranulation"/>
</dbReference>
<dbReference type="BioGRID-ORCS" id="64138">
    <property type="hits" value="3 hits in 77 CRISPR screens"/>
</dbReference>
<dbReference type="ChiTaRS" id="Ctsz">
    <property type="organism name" value="mouse"/>
</dbReference>
<dbReference type="PRO" id="PR:Q9WUU7"/>
<dbReference type="Proteomes" id="UP000000589">
    <property type="component" value="Chromosome 2"/>
</dbReference>
<dbReference type="RNAct" id="Q9WUU7">
    <property type="molecule type" value="protein"/>
</dbReference>
<dbReference type="Bgee" id="ENSMUSG00000016256">
    <property type="expression patterns" value="Expressed in stroma of bone marrow and 255 other cell types or tissues"/>
</dbReference>
<dbReference type="ExpressionAtlas" id="Q9WUU7">
    <property type="expression patterns" value="baseline and differential"/>
</dbReference>
<dbReference type="GO" id="GO:0005938">
    <property type="term" value="C:cell cortex"/>
    <property type="evidence" value="ECO:0007669"/>
    <property type="project" value="Ensembl"/>
</dbReference>
<dbReference type="GO" id="GO:0009986">
    <property type="term" value="C:cell surface"/>
    <property type="evidence" value="ECO:0007669"/>
    <property type="project" value="Ensembl"/>
</dbReference>
<dbReference type="GO" id="GO:0062023">
    <property type="term" value="C:collagen-containing extracellular matrix"/>
    <property type="evidence" value="ECO:0007005"/>
    <property type="project" value="BHF-UCL"/>
</dbReference>
<dbReference type="GO" id="GO:0031410">
    <property type="term" value="C:cytoplasmic vesicle"/>
    <property type="evidence" value="ECO:0007669"/>
    <property type="project" value="Ensembl"/>
</dbReference>
<dbReference type="GO" id="GO:0005783">
    <property type="term" value="C:endoplasmic reticulum"/>
    <property type="evidence" value="ECO:0007669"/>
    <property type="project" value="Ensembl"/>
</dbReference>
<dbReference type="GO" id="GO:0005615">
    <property type="term" value="C:extracellular space"/>
    <property type="evidence" value="ECO:0007669"/>
    <property type="project" value="Ensembl"/>
</dbReference>
<dbReference type="GO" id="GO:0030426">
    <property type="term" value="C:growth cone"/>
    <property type="evidence" value="ECO:0007669"/>
    <property type="project" value="Ensembl"/>
</dbReference>
<dbReference type="GO" id="GO:0005764">
    <property type="term" value="C:lysosome"/>
    <property type="evidence" value="ECO:0007669"/>
    <property type="project" value="UniProtKB-SubCell"/>
</dbReference>
<dbReference type="GO" id="GO:0016807">
    <property type="term" value="F:cysteine-type carboxypeptidase activity"/>
    <property type="evidence" value="ECO:0007669"/>
    <property type="project" value="UniProtKB-EC"/>
</dbReference>
<dbReference type="GO" id="GO:0060441">
    <property type="term" value="P:epithelial tube branching involved in lung morphogenesis"/>
    <property type="evidence" value="ECO:0000270"/>
    <property type="project" value="UniProtKB"/>
</dbReference>
<dbReference type="GO" id="GO:0010757">
    <property type="term" value="P:negative regulation of plasminogen activation"/>
    <property type="evidence" value="ECO:0007669"/>
    <property type="project" value="Ensembl"/>
</dbReference>
<dbReference type="GO" id="GO:0006508">
    <property type="term" value="P:proteolysis"/>
    <property type="evidence" value="ECO:0007669"/>
    <property type="project" value="UniProtKB-KW"/>
</dbReference>
<dbReference type="CDD" id="cd02698">
    <property type="entry name" value="Peptidase_C1A_CathepsinX"/>
    <property type="match status" value="1"/>
</dbReference>
<dbReference type="FunFam" id="3.90.70.10:FF:000060">
    <property type="entry name" value="Cathepsin Z"/>
    <property type="match status" value="1"/>
</dbReference>
<dbReference type="Gene3D" id="3.90.70.10">
    <property type="entry name" value="Cysteine proteinases"/>
    <property type="match status" value="1"/>
</dbReference>
<dbReference type="InterPro" id="IPR033157">
    <property type="entry name" value="CTSZ"/>
</dbReference>
<dbReference type="InterPro" id="IPR038765">
    <property type="entry name" value="Papain-like_cys_pep_sf"/>
</dbReference>
<dbReference type="InterPro" id="IPR025661">
    <property type="entry name" value="Pept_asp_AS"/>
</dbReference>
<dbReference type="InterPro" id="IPR013128">
    <property type="entry name" value="Peptidase_C1A"/>
</dbReference>
<dbReference type="InterPro" id="IPR000668">
    <property type="entry name" value="Peptidase_C1A_C"/>
</dbReference>
<dbReference type="PANTHER" id="PTHR12411">
    <property type="entry name" value="CYSTEINE PROTEASE FAMILY C1-RELATED"/>
    <property type="match status" value="1"/>
</dbReference>
<dbReference type="Pfam" id="PF00112">
    <property type="entry name" value="Peptidase_C1"/>
    <property type="match status" value="1"/>
</dbReference>
<dbReference type="PRINTS" id="PR00705">
    <property type="entry name" value="PAPAIN"/>
</dbReference>
<dbReference type="SMART" id="SM00645">
    <property type="entry name" value="Pept_C1"/>
    <property type="match status" value="1"/>
</dbReference>
<dbReference type="SUPFAM" id="SSF54001">
    <property type="entry name" value="Cysteine proteinases"/>
    <property type="match status" value="1"/>
</dbReference>
<dbReference type="PROSITE" id="PS00640">
    <property type="entry name" value="THIOL_PROTEASE_ASN"/>
    <property type="match status" value="1"/>
</dbReference>
<proteinExistence type="evidence at protein level"/>
<evidence type="ECO:0000250" key="1">
    <source>
        <dbReference type="UniProtKB" id="Q9R1T3"/>
    </source>
</evidence>
<evidence type="ECO:0000250" key="2">
    <source>
        <dbReference type="UniProtKB" id="Q9UBR2"/>
    </source>
</evidence>
<evidence type="ECO:0000255" key="3"/>
<evidence type="ECO:0000255" key="4">
    <source>
        <dbReference type="PROSITE-ProRule" id="PRU10090"/>
    </source>
</evidence>
<name>CATZ_MOUSE</name>
<gene>
    <name type="primary">Ctsz</name>
</gene>
<sequence>MASSGSVQQLPLVLLMLLLASAARARLYFRSGQTCYHPIRGDQLALLGRRTYPRPHEYLSPADLPKNWDWRNVNGVNYASVTRNQHIPQYCGSCWAHGSTSAMADRINIKRKGAWPSILLSVQNVIDCGNAGSCEGGNDLPVWEYAHKHGIPDETCNNYQAKDQDCDKFNQCGTCTEFKECHTIQNYTLWRVGDYGSLSGREKMMAEIYANGPISCGIMATEMMSNYTGGIYAEHQDQAVINHIISVAGWGVSNDGIEYWIVRNSWGEPWGEKGWMRIVTSTYKGGTGDSYNLAIESACTFGDPIV</sequence>
<accession>Q9WUU7</accession>